<proteinExistence type="evidence at protein level"/>
<protein>
    <recommendedName>
        <fullName>Protein kinase C and casein kinase substrate in neurons protein 2</fullName>
    </recommendedName>
    <alternativeName>
        <fullName>Focal adhesion protein of 52 kDa</fullName>
        <shortName>FAP52</shortName>
    </alternativeName>
</protein>
<comment type="function">
    <text evidence="3">Regulates the morphogenesis and endocytosis of caveolae. Lipid-binding protein that is able to promote the tubulation of the phosphatidic acid-containing membranes it preferentially binds. Plays a role in intracellular vesicle-mediated transport. Involved in the endocytosis of cell-surface receptors like the EGF receptor, contributing to its internalization in the absence of EGF stimulus. Essential for endothelial organization in sprouting angiogenesis, modulates CDH5-based junctions. Facilitates endothelial front-rear polarity during migration by recruiting EHD4 and MICALL1 to asymmetric adherens junctions between leader and follower cells.</text>
</comment>
<comment type="subcellular location">
    <subcellularLocation>
        <location evidence="3">Cytoplasm</location>
    </subcellularLocation>
    <subcellularLocation>
        <location evidence="3">Cytoplasm</location>
        <location evidence="3">Cytoskeleton</location>
    </subcellularLocation>
    <subcellularLocation>
        <location evidence="3">Cytoplasmic vesicle membrane</location>
        <topology evidence="3">Peripheral membrane protein</topology>
        <orientation evidence="3">Cytoplasmic side</orientation>
    </subcellularLocation>
    <subcellularLocation>
        <location evidence="3">Cell projection</location>
        <location evidence="3">Ruffle membrane</location>
        <topology evidence="3">Peripheral membrane protein</topology>
        <orientation evidence="3">Cytoplasmic side</orientation>
    </subcellularLocation>
    <subcellularLocation>
        <location evidence="3">Early endosome</location>
    </subcellularLocation>
    <subcellularLocation>
        <location evidence="1">Recycling endosome membrane</location>
    </subcellularLocation>
    <subcellularLocation>
        <location evidence="3">Cell membrane</location>
        <topology evidence="3">Peripheral membrane protein</topology>
        <orientation evidence="3">Cytoplasmic side</orientation>
    </subcellularLocation>
    <subcellularLocation>
        <location evidence="2">Cell projection</location>
    </subcellularLocation>
    <subcellularLocation>
        <location evidence="3">Membrane</location>
        <location evidence="3">Caveola</location>
    </subcellularLocation>
    <subcellularLocation>
        <location evidence="7">Cell junction</location>
        <location evidence="7">Focal adhesion</location>
    </subcellularLocation>
    <text evidence="3">Detected at the neck of flask-shaped caveolae. Localization to tubular recycling endosomes probably requires interaction with MICALL1 and EHD1.</text>
</comment>
<comment type="tissue specificity">
    <text evidence="7">Detected in intestine, cardiac muscle, lung and brain (at protein level). Expressed in all tissues tested, including, gizzard, liver, cardiac muscle, skeletal muscle and skin.</text>
</comment>
<comment type="domain">
    <text evidence="2 3">The F-BAR domain forms a coiled coil and mediates membrane-binding and membrane tubulation (By similarity). Autoinhibition of these functions is mediated by an interaction between the SH3 and F-BAR domains (By similarity). The F-Bar domain also mediates the binding to the cell actin cytoskeleton through the interaction with CAV-1 (By similarity).</text>
</comment>
<comment type="PTM">
    <text evidence="7">Phosphorylated on serine residues.</text>
</comment>
<comment type="similarity">
    <text evidence="8">Belongs to the PACSIN family.</text>
</comment>
<dbReference type="EMBL" id="Z50798">
    <property type="protein sequence ID" value="CAA90678.1"/>
    <property type="molecule type" value="mRNA"/>
</dbReference>
<dbReference type="RefSeq" id="NP_001152983.1">
    <property type="nucleotide sequence ID" value="NM_001159511.1"/>
</dbReference>
<dbReference type="RefSeq" id="NP_990420.1">
    <property type="nucleotide sequence ID" value="NM_205089.1"/>
</dbReference>
<dbReference type="PDB" id="4BNE">
    <property type="method" value="X-ray"/>
    <property type="resolution" value="2.57 A"/>
    <property type="chains" value="A/B=1-448"/>
</dbReference>
<dbReference type="PDB" id="8RSW">
    <property type="method" value="NMR"/>
    <property type="chains" value="A=391-448"/>
</dbReference>
<dbReference type="PDBsum" id="4BNE"/>
<dbReference type="PDBsum" id="8RSW"/>
<dbReference type="SMR" id="O13154"/>
<dbReference type="FunCoup" id="O13154">
    <property type="interactions" value="2864"/>
</dbReference>
<dbReference type="STRING" id="9031.ENSGALP00000022861"/>
<dbReference type="GeneID" id="395975"/>
<dbReference type="KEGG" id="gga:395975"/>
<dbReference type="CTD" id="11252"/>
<dbReference type="VEuPathDB" id="HostDB:geneid_395975"/>
<dbReference type="eggNOG" id="KOG2856">
    <property type="taxonomic scope" value="Eukaryota"/>
</dbReference>
<dbReference type="InParanoid" id="O13154"/>
<dbReference type="OrthoDB" id="10255128at2759"/>
<dbReference type="PhylomeDB" id="O13154"/>
<dbReference type="EvolutionaryTrace" id="O13154"/>
<dbReference type="PRO" id="PR:O13154"/>
<dbReference type="Proteomes" id="UP000000539">
    <property type="component" value="Unassembled WGS sequence"/>
</dbReference>
<dbReference type="GO" id="GO:0005901">
    <property type="term" value="C:caveola"/>
    <property type="evidence" value="ECO:0007669"/>
    <property type="project" value="UniProtKB-SubCell"/>
</dbReference>
<dbReference type="GO" id="GO:0005737">
    <property type="term" value="C:cytoplasm"/>
    <property type="evidence" value="ECO:0000318"/>
    <property type="project" value="GO_Central"/>
</dbReference>
<dbReference type="GO" id="GO:0005856">
    <property type="term" value="C:cytoskeleton"/>
    <property type="evidence" value="ECO:0007669"/>
    <property type="project" value="UniProtKB-SubCell"/>
</dbReference>
<dbReference type="GO" id="GO:0005829">
    <property type="term" value="C:cytosol"/>
    <property type="evidence" value="ECO:0000250"/>
    <property type="project" value="AgBase"/>
</dbReference>
<dbReference type="GO" id="GO:0005769">
    <property type="term" value="C:early endosome"/>
    <property type="evidence" value="ECO:0007669"/>
    <property type="project" value="UniProtKB-SubCell"/>
</dbReference>
<dbReference type="GO" id="GO:0005768">
    <property type="term" value="C:endosome"/>
    <property type="evidence" value="ECO:0000318"/>
    <property type="project" value="GO_Central"/>
</dbReference>
<dbReference type="GO" id="GO:0005925">
    <property type="term" value="C:focal adhesion"/>
    <property type="evidence" value="ECO:0007669"/>
    <property type="project" value="UniProtKB-SubCell"/>
</dbReference>
<dbReference type="GO" id="GO:0055038">
    <property type="term" value="C:recycling endosome membrane"/>
    <property type="evidence" value="ECO:0007669"/>
    <property type="project" value="UniProtKB-SubCell"/>
</dbReference>
<dbReference type="GO" id="GO:0032587">
    <property type="term" value="C:ruffle membrane"/>
    <property type="evidence" value="ECO:0007669"/>
    <property type="project" value="UniProtKB-SubCell"/>
</dbReference>
<dbReference type="GO" id="GO:0008092">
    <property type="term" value="F:cytoskeletal protein binding"/>
    <property type="evidence" value="ECO:0000250"/>
    <property type="project" value="AgBase"/>
</dbReference>
<dbReference type="GO" id="GO:0070300">
    <property type="term" value="F:phosphatidic acid binding"/>
    <property type="evidence" value="ECO:0000250"/>
    <property type="project" value="UniProtKB"/>
</dbReference>
<dbReference type="GO" id="GO:0005543">
    <property type="term" value="F:phospholipid binding"/>
    <property type="evidence" value="ECO:0000318"/>
    <property type="project" value="GO_Central"/>
</dbReference>
<dbReference type="GO" id="GO:0030036">
    <property type="term" value="P:actin cytoskeleton organization"/>
    <property type="evidence" value="ECO:0007669"/>
    <property type="project" value="InterPro"/>
</dbReference>
<dbReference type="GO" id="GO:0070836">
    <property type="term" value="P:caveola assembly"/>
    <property type="evidence" value="ECO:0007669"/>
    <property type="project" value="InterPro"/>
</dbReference>
<dbReference type="GO" id="GO:0007010">
    <property type="term" value="P:cytoskeleton organization"/>
    <property type="evidence" value="ECO:0000318"/>
    <property type="project" value="GO_Central"/>
</dbReference>
<dbReference type="GO" id="GO:0006897">
    <property type="term" value="P:endocytosis"/>
    <property type="evidence" value="ECO:0007669"/>
    <property type="project" value="UniProtKB-KW"/>
</dbReference>
<dbReference type="GO" id="GO:0045806">
    <property type="term" value="P:negative regulation of endocytosis"/>
    <property type="evidence" value="ECO:0000250"/>
    <property type="project" value="AgBase"/>
</dbReference>
<dbReference type="GO" id="GO:0097320">
    <property type="term" value="P:plasma membrane tubulation"/>
    <property type="evidence" value="ECO:0000318"/>
    <property type="project" value="GO_Central"/>
</dbReference>
<dbReference type="GO" id="GO:0030100">
    <property type="term" value="P:regulation of endocytosis"/>
    <property type="evidence" value="ECO:0000318"/>
    <property type="project" value="GO_Central"/>
</dbReference>
<dbReference type="CDD" id="cd07679">
    <property type="entry name" value="F-BAR_PACSIN2"/>
    <property type="match status" value="1"/>
</dbReference>
<dbReference type="CDD" id="cd11998">
    <property type="entry name" value="SH3_PACSIN1-2"/>
    <property type="match status" value="1"/>
</dbReference>
<dbReference type="FunFam" id="2.30.30.40:FF:000014">
    <property type="entry name" value="Kinase C and casein kinase substrate in neurons protein"/>
    <property type="match status" value="1"/>
</dbReference>
<dbReference type="FunFam" id="1.20.1270.60:FF:000205">
    <property type="entry name" value="Protein kinase C and casein kinase substrate in neurons protein 1"/>
    <property type="match status" value="1"/>
</dbReference>
<dbReference type="Gene3D" id="1.20.1270.60">
    <property type="entry name" value="Arfaptin homology (AH) domain/BAR domain"/>
    <property type="match status" value="1"/>
</dbReference>
<dbReference type="Gene3D" id="2.30.30.40">
    <property type="entry name" value="SH3 Domains"/>
    <property type="match status" value="1"/>
</dbReference>
<dbReference type="InterPro" id="IPR027267">
    <property type="entry name" value="AH/BAR_dom_sf"/>
</dbReference>
<dbReference type="InterPro" id="IPR031160">
    <property type="entry name" value="F_BAR"/>
</dbReference>
<dbReference type="InterPro" id="IPR001060">
    <property type="entry name" value="FCH_dom"/>
</dbReference>
<dbReference type="InterPro" id="IPR035743">
    <property type="entry name" value="PACSIN1/PACSIN2_SH3"/>
</dbReference>
<dbReference type="InterPro" id="IPR037453">
    <property type="entry name" value="PACSIN2_F-BAR"/>
</dbReference>
<dbReference type="InterPro" id="IPR036028">
    <property type="entry name" value="SH3-like_dom_sf"/>
</dbReference>
<dbReference type="InterPro" id="IPR001452">
    <property type="entry name" value="SH3_domain"/>
</dbReference>
<dbReference type="PANTHER" id="PTHR23065">
    <property type="entry name" value="PROLINE-SERINE-THREONINE PHOSPHATASE INTERACTING PROTEIN 1"/>
    <property type="match status" value="1"/>
</dbReference>
<dbReference type="PANTHER" id="PTHR23065:SF14">
    <property type="entry name" value="PROTEIN KINASE C AND CASEIN KINASE SUBSTRATE IN NEURONS PROTEIN 2"/>
    <property type="match status" value="1"/>
</dbReference>
<dbReference type="Pfam" id="PF00611">
    <property type="entry name" value="FCH"/>
    <property type="match status" value="1"/>
</dbReference>
<dbReference type="Pfam" id="PF14604">
    <property type="entry name" value="SH3_9"/>
    <property type="match status" value="1"/>
</dbReference>
<dbReference type="PRINTS" id="PR00452">
    <property type="entry name" value="SH3DOMAIN"/>
</dbReference>
<dbReference type="SMART" id="SM00055">
    <property type="entry name" value="FCH"/>
    <property type="match status" value="1"/>
</dbReference>
<dbReference type="SMART" id="SM00326">
    <property type="entry name" value="SH3"/>
    <property type="match status" value="1"/>
</dbReference>
<dbReference type="SUPFAM" id="SSF103657">
    <property type="entry name" value="BAR/IMD domain-like"/>
    <property type="match status" value="1"/>
</dbReference>
<dbReference type="SUPFAM" id="SSF50044">
    <property type="entry name" value="SH3-domain"/>
    <property type="match status" value="1"/>
</dbReference>
<dbReference type="PROSITE" id="PS51741">
    <property type="entry name" value="F_BAR"/>
    <property type="match status" value="1"/>
</dbReference>
<dbReference type="PROSITE" id="PS50002">
    <property type="entry name" value="SH3"/>
    <property type="match status" value="1"/>
</dbReference>
<feature type="chain" id="PRO_0000161798" description="Protein kinase C and casein kinase substrate in neurons protein 2">
    <location>
        <begin position="1"/>
        <end position="448"/>
    </location>
</feature>
<feature type="domain" description="F-BAR" evidence="5">
    <location>
        <begin position="11"/>
        <end position="282"/>
    </location>
</feature>
<feature type="domain" description="SH3" evidence="4">
    <location>
        <begin position="388"/>
        <end position="448"/>
    </location>
</feature>
<feature type="region of interest" description="Disordered" evidence="6">
    <location>
        <begin position="315"/>
        <end position="386"/>
    </location>
</feature>
<feature type="coiled-coil region" evidence="1">
    <location>
        <begin position="25"/>
        <end position="274"/>
    </location>
</feature>
<feature type="short sequence motif" description="NPF1">
    <location>
        <begin position="367"/>
        <end position="369"/>
    </location>
</feature>
<feature type="short sequence motif" description="NPF2">
    <location>
        <begin position="379"/>
        <end position="381"/>
    </location>
</feature>
<feature type="compositionally biased region" description="Polar residues" evidence="6">
    <location>
        <begin position="329"/>
        <end position="358"/>
    </location>
</feature>
<feature type="turn" evidence="9">
    <location>
        <begin position="21"/>
        <end position="24"/>
    </location>
</feature>
<feature type="helix" evidence="9">
    <location>
        <begin position="25"/>
        <end position="72"/>
    </location>
</feature>
<feature type="helix" evidence="9">
    <location>
        <begin position="77"/>
        <end position="106"/>
    </location>
</feature>
<feature type="helix" evidence="9">
    <location>
        <begin position="108"/>
        <end position="119"/>
    </location>
</feature>
<feature type="strand" evidence="9">
    <location>
        <begin position="126"/>
        <end position="128"/>
    </location>
</feature>
<feature type="helix" evidence="9">
    <location>
        <begin position="129"/>
        <end position="174"/>
    </location>
</feature>
<feature type="turn" evidence="9">
    <location>
        <begin position="175"/>
        <end position="178"/>
    </location>
</feature>
<feature type="helix" evidence="9">
    <location>
        <begin position="184"/>
        <end position="255"/>
    </location>
</feature>
<feature type="turn" evidence="9">
    <location>
        <begin position="257"/>
        <end position="259"/>
    </location>
</feature>
<feature type="helix" evidence="9">
    <location>
        <begin position="261"/>
        <end position="275"/>
    </location>
</feature>
<feature type="helix" evidence="9">
    <location>
        <begin position="279"/>
        <end position="290"/>
    </location>
</feature>
<reference key="1">
    <citation type="journal article" date="1997" name="J. Biol. Chem.">
        <title>FAP52, a novel, SH3 domain-containing focal adhesion protein.</title>
        <authorList>
            <person name="Merilaeinen J."/>
            <person name="Lehto V.-P."/>
            <person name="Wasenius V.-M."/>
        </authorList>
    </citation>
    <scope>NUCLEOTIDE SEQUENCE [MRNA]</scope>
    <scope>SUBCELLULAR LOCATION</scope>
    <scope>PHOSPHORYLATION</scope>
    <scope>TISSUE SPECIFICITY</scope>
    <source>
        <tissue>Brain</tissue>
    </source>
</reference>
<name>PACN2_CHICK</name>
<evidence type="ECO:0000250" key="1"/>
<evidence type="ECO:0000250" key="2">
    <source>
        <dbReference type="UniProtKB" id="Q9UNF0"/>
    </source>
</evidence>
<evidence type="ECO:0000250" key="3">
    <source>
        <dbReference type="UniProtKB" id="Q9WVE8"/>
    </source>
</evidence>
<evidence type="ECO:0000255" key="4">
    <source>
        <dbReference type="PROSITE-ProRule" id="PRU00192"/>
    </source>
</evidence>
<evidence type="ECO:0000255" key="5">
    <source>
        <dbReference type="PROSITE-ProRule" id="PRU01077"/>
    </source>
</evidence>
<evidence type="ECO:0000256" key="6">
    <source>
        <dbReference type="SAM" id="MobiDB-lite"/>
    </source>
</evidence>
<evidence type="ECO:0000269" key="7">
    <source>
    </source>
</evidence>
<evidence type="ECO:0000305" key="8"/>
<evidence type="ECO:0007829" key="9">
    <source>
        <dbReference type="PDB" id="4BNE"/>
    </source>
</evidence>
<accession>O13154</accession>
<keyword id="KW-0002">3D-structure</keyword>
<keyword id="KW-0965">Cell junction</keyword>
<keyword id="KW-1003">Cell membrane</keyword>
<keyword id="KW-0966">Cell projection</keyword>
<keyword id="KW-0175">Coiled coil</keyword>
<keyword id="KW-0963">Cytoplasm</keyword>
<keyword id="KW-0968">Cytoplasmic vesicle</keyword>
<keyword id="KW-0206">Cytoskeleton</keyword>
<keyword id="KW-0254">Endocytosis</keyword>
<keyword id="KW-0967">Endosome</keyword>
<keyword id="KW-0446">Lipid-binding</keyword>
<keyword id="KW-0472">Membrane</keyword>
<keyword id="KW-0597">Phosphoprotein</keyword>
<keyword id="KW-1185">Reference proteome</keyword>
<keyword id="KW-0728">SH3 domain</keyword>
<organism>
    <name type="scientific">Gallus gallus</name>
    <name type="common">Chicken</name>
    <dbReference type="NCBI Taxonomy" id="9031"/>
    <lineage>
        <taxon>Eukaryota</taxon>
        <taxon>Metazoa</taxon>
        <taxon>Chordata</taxon>
        <taxon>Craniata</taxon>
        <taxon>Vertebrata</taxon>
        <taxon>Euteleostomi</taxon>
        <taxon>Archelosauria</taxon>
        <taxon>Archosauria</taxon>
        <taxon>Dinosauria</taxon>
        <taxon>Saurischia</taxon>
        <taxon>Theropoda</taxon>
        <taxon>Coelurosauria</taxon>
        <taxon>Aves</taxon>
        <taxon>Neognathae</taxon>
        <taxon>Galloanserae</taxon>
        <taxon>Galliformes</taxon>
        <taxon>Phasianidae</taxon>
        <taxon>Phasianinae</taxon>
        <taxon>Gallus</taxon>
    </lineage>
</organism>
<gene>
    <name type="primary">PACSIN2</name>
</gene>
<sequence>MSGSYDDSVGVEVSSDSFWEVGNYKRTVKRIDDGHRLCNDLMNCIHERARIEKVYAQQLTEWAKRWKQLVEKGPQYGTVERAWCAFMSEAEKVSELHLEVKGSLMNEDFEKIKNWQKEAFHKQMMGGFKETKEAEDGFRKAQKPWAKKLKEVEAAKKAYHAACKEEKLAISRETNSKADPALNPEQLKKLQDKVERSKQDVLKTKAKYEKSLKELDNATPQYMENMEQVFEQCQQFEEKRLRFFREVLLEVQKHLDLSNVASYKNIYRELEQNIKTADAVEDLRWFRANQGPGMSMNWPQFEDDEWSADLNRTLSRREKKKASDGVTLTGINQTGDQVSQPNKHSSVSSYEKNQSYPTDWSDEESNNPFSSTDAKGDTNPFDEDTSPVMEVRVRALYDYEGQEQDELSFKAGDELTKMENEDEQGWCKGRLDNGQVGLYPANYVEPIQ</sequence>